<protein>
    <recommendedName>
        <fullName evidence="1">5'-nucleotidase SurE</fullName>
        <ecNumber evidence="1">3.1.3.5</ecNumber>
    </recommendedName>
    <alternativeName>
        <fullName evidence="1">Nucleoside 5'-monophosphate phosphohydrolase</fullName>
    </alternativeName>
</protein>
<sequence>MRILVTNDDGIYSPGLWALAEAASQFGEVFVAAPDTEQSAAGHAITIAHPVRAYPHPSPLHAPHFPAYRVRGTPADCVALGLHLFGPVDLVLSGVNLGSNLGHEIWHSGTVAAAKQGYLFGLSAAAFSVPLNGEVPDFAGLRPWLLRTLETLLRLERPFLVNVNLPLRPKGFLWTRQSVRAYEGVVIPGEDPMGRPFYWFAPRPLKEAEEGTDRWAVAQGFVSATPLRLDLTDETRLQPTLAHD</sequence>
<dbReference type="EC" id="3.1.3.5" evidence="1"/>
<dbReference type="EMBL" id="AP008227">
    <property type="protein sequence ID" value="BAD71866.1"/>
    <property type="molecule type" value="Genomic_DNA"/>
</dbReference>
<dbReference type="RefSeq" id="WP_011229220.1">
    <property type="nucleotide sequence ID" value="NC_006462.1"/>
</dbReference>
<dbReference type="RefSeq" id="YP_145309.1">
    <property type="nucleotide sequence ID" value="NC_006462.1"/>
</dbReference>
<dbReference type="PDB" id="2E69">
    <property type="method" value="X-ray"/>
    <property type="resolution" value="2.20 A"/>
    <property type="chains" value="A/B/C/D=1-244"/>
</dbReference>
<dbReference type="PDB" id="2E6B">
    <property type="method" value="X-ray"/>
    <property type="resolution" value="2.50 A"/>
    <property type="chains" value="A/B/C/D=1-244"/>
</dbReference>
<dbReference type="PDB" id="2E6C">
    <property type="method" value="X-ray"/>
    <property type="resolution" value="2.05 A"/>
    <property type="chains" value="A/B/C/D=1-244"/>
</dbReference>
<dbReference type="PDB" id="2E6E">
    <property type="method" value="X-ray"/>
    <property type="resolution" value="2.50 A"/>
    <property type="chains" value="A/B/C/D=1-244"/>
</dbReference>
<dbReference type="PDB" id="2E6G">
    <property type="method" value="X-ray"/>
    <property type="resolution" value="2.60 A"/>
    <property type="chains" value="A/B/C/D/E/F/G/H/I/J/K/L=1-244"/>
</dbReference>
<dbReference type="PDB" id="2E6H">
    <property type="method" value="X-ray"/>
    <property type="resolution" value="2.10 A"/>
    <property type="chains" value="A/B/C/D=1-244"/>
</dbReference>
<dbReference type="PDBsum" id="2E69"/>
<dbReference type="PDBsum" id="2E6B"/>
<dbReference type="PDBsum" id="2E6C"/>
<dbReference type="PDBsum" id="2E6E"/>
<dbReference type="PDBsum" id="2E6G"/>
<dbReference type="PDBsum" id="2E6H"/>
<dbReference type="SMR" id="Q53W92"/>
<dbReference type="EnsemblBacteria" id="BAD71866">
    <property type="protein sequence ID" value="BAD71866"/>
    <property type="gene ID" value="BAD71866"/>
</dbReference>
<dbReference type="GeneID" id="3169602"/>
<dbReference type="KEGG" id="ttj:TTHB070"/>
<dbReference type="PATRIC" id="fig|300852.9.peg.2014"/>
<dbReference type="HOGENOM" id="CLU_045192_1_3_0"/>
<dbReference type="PhylomeDB" id="Q53W92"/>
<dbReference type="EvolutionaryTrace" id="Q53W92"/>
<dbReference type="Proteomes" id="UP000000532">
    <property type="component" value="Plasmid pTT27"/>
</dbReference>
<dbReference type="GO" id="GO:0005737">
    <property type="term" value="C:cytoplasm"/>
    <property type="evidence" value="ECO:0007669"/>
    <property type="project" value="UniProtKB-SubCell"/>
</dbReference>
<dbReference type="GO" id="GO:0008254">
    <property type="term" value="F:3'-nucleotidase activity"/>
    <property type="evidence" value="ECO:0007669"/>
    <property type="project" value="TreeGrafter"/>
</dbReference>
<dbReference type="GO" id="GO:0008253">
    <property type="term" value="F:5'-nucleotidase activity"/>
    <property type="evidence" value="ECO:0007669"/>
    <property type="project" value="UniProtKB-UniRule"/>
</dbReference>
<dbReference type="GO" id="GO:0004309">
    <property type="term" value="F:exopolyphosphatase activity"/>
    <property type="evidence" value="ECO:0007669"/>
    <property type="project" value="TreeGrafter"/>
</dbReference>
<dbReference type="GO" id="GO:0046872">
    <property type="term" value="F:metal ion binding"/>
    <property type="evidence" value="ECO:0007669"/>
    <property type="project" value="UniProtKB-UniRule"/>
</dbReference>
<dbReference type="GO" id="GO:0000166">
    <property type="term" value="F:nucleotide binding"/>
    <property type="evidence" value="ECO:0007669"/>
    <property type="project" value="UniProtKB-KW"/>
</dbReference>
<dbReference type="Gene3D" id="3.40.1210.10">
    <property type="entry name" value="Survival protein SurE-like phosphatase/nucleotidase"/>
    <property type="match status" value="1"/>
</dbReference>
<dbReference type="HAMAP" id="MF_00060">
    <property type="entry name" value="SurE"/>
    <property type="match status" value="1"/>
</dbReference>
<dbReference type="InterPro" id="IPR030048">
    <property type="entry name" value="SurE"/>
</dbReference>
<dbReference type="InterPro" id="IPR002828">
    <property type="entry name" value="SurE-like_Pase/nucleotidase"/>
</dbReference>
<dbReference type="InterPro" id="IPR036523">
    <property type="entry name" value="SurE-like_sf"/>
</dbReference>
<dbReference type="NCBIfam" id="TIGR00087">
    <property type="entry name" value="surE"/>
    <property type="match status" value="1"/>
</dbReference>
<dbReference type="PANTHER" id="PTHR30457">
    <property type="entry name" value="5'-NUCLEOTIDASE SURE"/>
    <property type="match status" value="1"/>
</dbReference>
<dbReference type="PANTHER" id="PTHR30457:SF12">
    <property type="entry name" value="5'_3'-NUCLEOTIDASE SURE"/>
    <property type="match status" value="1"/>
</dbReference>
<dbReference type="Pfam" id="PF01975">
    <property type="entry name" value="SurE"/>
    <property type="match status" value="1"/>
</dbReference>
<dbReference type="SUPFAM" id="SSF64167">
    <property type="entry name" value="SurE-like"/>
    <property type="match status" value="1"/>
</dbReference>
<keyword id="KW-0002">3D-structure</keyword>
<keyword id="KW-0963">Cytoplasm</keyword>
<keyword id="KW-0378">Hydrolase</keyword>
<keyword id="KW-0479">Metal-binding</keyword>
<keyword id="KW-0547">Nucleotide-binding</keyword>
<keyword id="KW-0614">Plasmid</keyword>
<keyword id="KW-1185">Reference proteome</keyword>
<gene>
    <name evidence="1" type="primary">surE</name>
    <name type="ordered locus">TTHB070</name>
</gene>
<geneLocation type="plasmid">
    <name>pTT27</name>
</geneLocation>
<feature type="chain" id="PRO_0000235662" description="5'-nucleotidase SurE">
    <location>
        <begin position="1"/>
        <end position="244"/>
    </location>
</feature>
<feature type="binding site" evidence="1">
    <location>
        <position position="8"/>
    </location>
    <ligand>
        <name>a divalent metal cation</name>
        <dbReference type="ChEBI" id="CHEBI:60240"/>
    </ligand>
</feature>
<feature type="binding site" evidence="1">
    <location>
        <position position="9"/>
    </location>
    <ligand>
        <name>a divalent metal cation</name>
        <dbReference type="ChEBI" id="CHEBI:60240"/>
    </ligand>
</feature>
<feature type="binding site" evidence="1">
    <location>
        <position position="39"/>
    </location>
    <ligand>
        <name>a divalent metal cation</name>
        <dbReference type="ChEBI" id="CHEBI:60240"/>
    </ligand>
</feature>
<feature type="binding site" evidence="1">
    <location>
        <position position="96"/>
    </location>
    <ligand>
        <name>a divalent metal cation</name>
        <dbReference type="ChEBI" id="CHEBI:60240"/>
    </ligand>
</feature>
<feature type="strand" evidence="2">
    <location>
        <begin position="2"/>
        <end position="6"/>
    </location>
</feature>
<feature type="helix" evidence="2">
    <location>
        <begin position="14"/>
        <end position="23"/>
    </location>
</feature>
<feature type="turn" evidence="2">
    <location>
        <begin position="24"/>
        <end position="26"/>
    </location>
</feature>
<feature type="strand" evidence="2">
    <location>
        <begin position="27"/>
        <end position="34"/>
    </location>
</feature>
<feature type="strand" evidence="2">
    <location>
        <begin position="51"/>
        <end position="55"/>
    </location>
</feature>
<feature type="strand" evidence="2">
    <location>
        <begin position="67"/>
        <end position="72"/>
    </location>
</feature>
<feature type="helix" evidence="2">
    <location>
        <begin position="74"/>
        <end position="84"/>
    </location>
</feature>
<feature type="strand" evidence="2">
    <location>
        <begin position="90"/>
        <end position="98"/>
    </location>
</feature>
<feature type="helix" evidence="2">
    <location>
        <begin position="102"/>
        <end position="107"/>
    </location>
</feature>
<feature type="helix" evidence="2">
    <location>
        <begin position="109"/>
        <end position="119"/>
    </location>
</feature>
<feature type="strand" evidence="2">
    <location>
        <begin position="123"/>
        <end position="129"/>
    </location>
</feature>
<feature type="strand" evidence="2">
    <location>
        <begin position="132"/>
        <end position="134"/>
    </location>
</feature>
<feature type="helix" evidence="2">
    <location>
        <begin position="138"/>
        <end position="152"/>
    </location>
</feature>
<feature type="strand" evidence="2">
    <location>
        <begin position="160"/>
        <end position="164"/>
    </location>
</feature>
<feature type="strand" evidence="2">
    <location>
        <begin position="171"/>
        <end position="174"/>
    </location>
</feature>
<feature type="strand" evidence="2">
    <location>
        <begin position="186"/>
        <end position="190"/>
    </location>
</feature>
<feature type="strand" evidence="3">
    <location>
        <begin position="192"/>
        <end position="194"/>
    </location>
</feature>
<feature type="strand" evidence="2">
    <location>
        <begin position="196"/>
        <end position="200"/>
    </location>
</feature>
<feature type="strand" evidence="2">
    <location>
        <begin position="203"/>
        <end position="206"/>
    </location>
</feature>
<feature type="helix" evidence="2">
    <location>
        <begin position="213"/>
        <end position="218"/>
    </location>
</feature>
<feature type="strand" evidence="2">
    <location>
        <begin position="221"/>
        <end position="227"/>
    </location>
</feature>
<feature type="helix" evidence="3">
    <location>
        <begin position="234"/>
        <end position="236"/>
    </location>
</feature>
<accession>Q53W92</accession>
<reference key="1">
    <citation type="submission" date="2004-11" db="EMBL/GenBank/DDBJ databases">
        <title>Complete genome sequence of Thermus thermophilus HB8.</title>
        <authorList>
            <person name="Masui R."/>
            <person name="Kurokawa K."/>
            <person name="Nakagawa N."/>
            <person name="Tokunaga F."/>
            <person name="Koyama Y."/>
            <person name="Shibata T."/>
            <person name="Oshima T."/>
            <person name="Yokoyama S."/>
            <person name="Yasunaga T."/>
            <person name="Kuramitsu S."/>
        </authorList>
    </citation>
    <scope>NUCLEOTIDE SEQUENCE [LARGE SCALE GENOMIC DNA]</scope>
    <source>
        <strain>ATCC 27634 / DSM 579 / HB8</strain>
    </source>
</reference>
<evidence type="ECO:0000255" key="1">
    <source>
        <dbReference type="HAMAP-Rule" id="MF_00060"/>
    </source>
</evidence>
<evidence type="ECO:0007829" key="2">
    <source>
        <dbReference type="PDB" id="2E6C"/>
    </source>
</evidence>
<evidence type="ECO:0007829" key="3">
    <source>
        <dbReference type="PDB" id="2E6G"/>
    </source>
</evidence>
<proteinExistence type="evidence at protein level"/>
<organism>
    <name type="scientific">Thermus thermophilus (strain ATCC 27634 / DSM 579 / HB8)</name>
    <dbReference type="NCBI Taxonomy" id="300852"/>
    <lineage>
        <taxon>Bacteria</taxon>
        <taxon>Thermotogati</taxon>
        <taxon>Deinococcota</taxon>
        <taxon>Deinococci</taxon>
        <taxon>Thermales</taxon>
        <taxon>Thermaceae</taxon>
        <taxon>Thermus</taxon>
    </lineage>
</organism>
<name>SURE_THET8</name>
<comment type="function">
    <text evidence="1">Nucleotidase that shows phosphatase activity on nucleoside 5'-monophosphates.</text>
</comment>
<comment type="catalytic activity">
    <reaction evidence="1">
        <text>a ribonucleoside 5'-phosphate + H2O = a ribonucleoside + phosphate</text>
        <dbReference type="Rhea" id="RHEA:12484"/>
        <dbReference type="ChEBI" id="CHEBI:15377"/>
        <dbReference type="ChEBI" id="CHEBI:18254"/>
        <dbReference type="ChEBI" id="CHEBI:43474"/>
        <dbReference type="ChEBI" id="CHEBI:58043"/>
        <dbReference type="EC" id="3.1.3.5"/>
    </reaction>
</comment>
<comment type="cofactor">
    <cofactor evidence="1">
        <name>a divalent metal cation</name>
        <dbReference type="ChEBI" id="CHEBI:60240"/>
    </cofactor>
    <text evidence="1">Binds 1 divalent metal cation per subunit.</text>
</comment>
<comment type="subcellular location">
    <subcellularLocation>
        <location evidence="1">Cytoplasm</location>
    </subcellularLocation>
</comment>
<comment type="similarity">
    <text evidence="1">Belongs to the SurE nucleotidase family.</text>
</comment>